<name>GLMU_CALS4</name>
<gene>
    <name evidence="1" type="primary">glmU</name>
    <name type="ordered locus">TTE2572</name>
</gene>
<protein>
    <recommendedName>
        <fullName evidence="1">Bifunctional protein GlmU</fullName>
    </recommendedName>
    <domain>
        <recommendedName>
            <fullName evidence="1">UDP-N-acetylglucosamine pyrophosphorylase</fullName>
            <ecNumber evidence="1">2.7.7.23</ecNumber>
        </recommendedName>
        <alternativeName>
            <fullName evidence="1">N-acetylglucosamine-1-phosphate uridyltransferase</fullName>
        </alternativeName>
    </domain>
    <domain>
        <recommendedName>
            <fullName evidence="1">Glucosamine-1-phosphate N-acetyltransferase</fullName>
            <ecNumber evidence="1">2.3.1.157</ecNumber>
        </recommendedName>
    </domain>
</protein>
<reference key="1">
    <citation type="journal article" date="2002" name="Genome Res.">
        <title>A complete sequence of the T. tengcongensis genome.</title>
        <authorList>
            <person name="Bao Q."/>
            <person name="Tian Y."/>
            <person name="Li W."/>
            <person name="Xu Z."/>
            <person name="Xuan Z."/>
            <person name="Hu S."/>
            <person name="Dong W."/>
            <person name="Yang J."/>
            <person name="Chen Y."/>
            <person name="Xue Y."/>
            <person name="Xu Y."/>
            <person name="Lai X."/>
            <person name="Huang L."/>
            <person name="Dong X."/>
            <person name="Ma Y."/>
            <person name="Ling L."/>
            <person name="Tan H."/>
            <person name="Chen R."/>
            <person name="Wang J."/>
            <person name="Yu J."/>
            <person name="Yang H."/>
        </authorList>
    </citation>
    <scope>NUCLEOTIDE SEQUENCE [LARGE SCALE GENOMIC DNA]</scope>
    <source>
        <strain>DSM 15242 / JCM 11007 / NBRC 100824 / MB4</strain>
    </source>
</reference>
<evidence type="ECO:0000255" key="1">
    <source>
        <dbReference type="HAMAP-Rule" id="MF_01631"/>
    </source>
</evidence>
<proteinExistence type="inferred from homology"/>
<dbReference type="EC" id="2.7.7.23" evidence="1"/>
<dbReference type="EC" id="2.3.1.157" evidence="1"/>
<dbReference type="EMBL" id="AE008691">
    <property type="protein sequence ID" value="AAM25696.1"/>
    <property type="molecule type" value="Genomic_DNA"/>
</dbReference>
<dbReference type="RefSeq" id="WP_011026573.1">
    <property type="nucleotide sequence ID" value="NC_003869.1"/>
</dbReference>
<dbReference type="SMR" id="Q8R752"/>
<dbReference type="STRING" id="273068.TTE2572"/>
<dbReference type="KEGG" id="tte:TTE2572"/>
<dbReference type="eggNOG" id="COG1207">
    <property type="taxonomic scope" value="Bacteria"/>
</dbReference>
<dbReference type="HOGENOM" id="CLU_029499_15_2_9"/>
<dbReference type="OrthoDB" id="9775031at2"/>
<dbReference type="UniPathway" id="UPA00113">
    <property type="reaction ID" value="UER00532"/>
</dbReference>
<dbReference type="UniPathway" id="UPA00113">
    <property type="reaction ID" value="UER00533"/>
</dbReference>
<dbReference type="UniPathway" id="UPA00973"/>
<dbReference type="Proteomes" id="UP000000555">
    <property type="component" value="Chromosome"/>
</dbReference>
<dbReference type="GO" id="GO:0005737">
    <property type="term" value="C:cytoplasm"/>
    <property type="evidence" value="ECO:0007669"/>
    <property type="project" value="UniProtKB-SubCell"/>
</dbReference>
<dbReference type="GO" id="GO:0016020">
    <property type="term" value="C:membrane"/>
    <property type="evidence" value="ECO:0007669"/>
    <property type="project" value="GOC"/>
</dbReference>
<dbReference type="GO" id="GO:0019134">
    <property type="term" value="F:glucosamine-1-phosphate N-acetyltransferase activity"/>
    <property type="evidence" value="ECO:0007669"/>
    <property type="project" value="UniProtKB-UniRule"/>
</dbReference>
<dbReference type="GO" id="GO:0000287">
    <property type="term" value="F:magnesium ion binding"/>
    <property type="evidence" value="ECO:0007669"/>
    <property type="project" value="UniProtKB-UniRule"/>
</dbReference>
<dbReference type="GO" id="GO:0003977">
    <property type="term" value="F:UDP-N-acetylglucosamine diphosphorylase activity"/>
    <property type="evidence" value="ECO:0007669"/>
    <property type="project" value="UniProtKB-UniRule"/>
</dbReference>
<dbReference type="GO" id="GO:0000902">
    <property type="term" value="P:cell morphogenesis"/>
    <property type="evidence" value="ECO:0007669"/>
    <property type="project" value="UniProtKB-UniRule"/>
</dbReference>
<dbReference type="GO" id="GO:0071555">
    <property type="term" value="P:cell wall organization"/>
    <property type="evidence" value="ECO:0007669"/>
    <property type="project" value="UniProtKB-KW"/>
</dbReference>
<dbReference type="GO" id="GO:0009245">
    <property type="term" value="P:lipid A biosynthetic process"/>
    <property type="evidence" value="ECO:0007669"/>
    <property type="project" value="UniProtKB-UniRule"/>
</dbReference>
<dbReference type="GO" id="GO:0009252">
    <property type="term" value="P:peptidoglycan biosynthetic process"/>
    <property type="evidence" value="ECO:0007669"/>
    <property type="project" value="UniProtKB-UniRule"/>
</dbReference>
<dbReference type="GO" id="GO:0008360">
    <property type="term" value="P:regulation of cell shape"/>
    <property type="evidence" value="ECO:0007669"/>
    <property type="project" value="UniProtKB-KW"/>
</dbReference>
<dbReference type="GO" id="GO:0006048">
    <property type="term" value="P:UDP-N-acetylglucosamine biosynthetic process"/>
    <property type="evidence" value="ECO:0007669"/>
    <property type="project" value="UniProtKB-UniPathway"/>
</dbReference>
<dbReference type="CDD" id="cd02540">
    <property type="entry name" value="GT2_GlmU_N_bac"/>
    <property type="match status" value="1"/>
</dbReference>
<dbReference type="CDD" id="cd03353">
    <property type="entry name" value="LbH_GlmU_C"/>
    <property type="match status" value="1"/>
</dbReference>
<dbReference type="Gene3D" id="2.160.10.10">
    <property type="entry name" value="Hexapeptide repeat proteins"/>
    <property type="match status" value="1"/>
</dbReference>
<dbReference type="Gene3D" id="3.90.550.10">
    <property type="entry name" value="Spore Coat Polysaccharide Biosynthesis Protein SpsA, Chain A"/>
    <property type="match status" value="1"/>
</dbReference>
<dbReference type="HAMAP" id="MF_01631">
    <property type="entry name" value="GlmU"/>
    <property type="match status" value="1"/>
</dbReference>
<dbReference type="InterPro" id="IPR005882">
    <property type="entry name" value="Bifunctional_GlmU"/>
</dbReference>
<dbReference type="InterPro" id="IPR050065">
    <property type="entry name" value="GlmU-like"/>
</dbReference>
<dbReference type="InterPro" id="IPR056818">
    <property type="entry name" value="GlmU/GlgC-like_hexapep"/>
</dbReference>
<dbReference type="InterPro" id="IPR038009">
    <property type="entry name" value="GlmU_C_LbH"/>
</dbReference>
<dbReference type="InterPro" id="IPR001451">
    <property type="entry name" value="Hexapep"/>
</dbReference>
<dbReference type="InterPro" id="IPR018357">
    <property type="entry name" value="Hexapep_transf_CS"/>
</dbReference>
<dbReference type="InterPro" id="IPR005835">
    <property type="entry name" value="NTP_transferase_dom"/>
</dbReference>
<dbReference type="InterPro" id="IPR029044">
    <property type="entry name" value="Nucleotide-diphossugar_trans"/>
</dbReference>
<dbReference type="InterPro" id="IPR011004">
    <property type="entry name" value="Trimer_LpxA-like_sf"/>
</dbReference>
<dbReference type="NCBIfam" id="TIGR01173">
    <property type="entry name" value="glmU"/>
    <property type="match status" value="1"/>
</dbReference>
<dbReference type="NCBIfam" id="NF010934">
    <property type="entry name" value="PRK14354.1"/>
    <property type="match status" value="1"/>
</dbReference>
<dbReference type="PANTHER" id="PTHR43584:SF3">
    <property type="entry name" value="BIFUNCTIONAL PROTEIN GLMU"/>
    <property type="match status" value="1"/>
</dbReference>
<dbReference type="PANTHER" id="PTHR43584">
    <property type="entry name" value="NUCLEOTIDYL TRANSFERASE"/>
    <property type="match status" value="1"/>
</dbReference>
<dbReference type="Pfam" id="PF00132">
    <property type="entry name" value="Hexapep"/>
    <property type="match status" value="1"/>
</dbReference>
<dbReference type="Pfam" id="PF24894">
    <property type="entry name" value="Hexapep_GlmU"/>
    <property type="match status" value="1"/>
</dbReference>
<dbReference type="Pfam" id="PF00483">
    <property type="entry name" value="NTP_transferase"/>
    <property type="match status" value="1"/>
</dbReference>
<dbReference type="SUPFAM" id="SSF53448">
    <property type="entry name" value="Nucleotide-diphospho-sugar transferases"/>
    <property type="match status" value="1"/>
</dbReference>
<dbReference type="SUPFAM" id="SSF51161">
    <property type="entry name" value="Trimeric LpxA-like enzymes"/>
    <property type="match status" value="1"/>
</dbReference>
<dbReference type="PROSITE" id="PS00101">
    <property type="entry name" value="HEXAPEP_TRANSFERASES"/>
    <property type="match status" value="1"/>
</dbReference>
<organism>
    <name type="scientific">Caldanaerobacter subterraneus subsp. tengcongensis (strain DSM 15242 / JCM 11007 / NBRC 100824 / MB4)</name>
    <name type="common">Thermoanaerobacter tengcongensis</name>
    <dbReference type="NCBI Taxonomy" id="273068"/>
    <lineage>
        <taxon>Bacteria</taxon>
        <taxon>Bacillati</taxon>
        <taxon>Bacillota</taxon>
        <taxon>Clostridia</taxon>
        <taxon>Thermoanaerobacterales</taxon>
        <taxon>Thermoanaerobacteraceae</taxon>
        <taxon>Caldanaerobacter</taxon>
    </lineage>
</organism>
<sequence>MEELVSVILAAGLGKRMKSKYPKVVHKVCGKPMVKWVVEAAQEAGSKEVIVVVGHGREMVEEVLGDEVKYAYQKVQLGTGHAVMMAEEFLPLEGMVLILTGDTPLITSDTLRKLVEYHISEGNDVTILSSIFDDPTGYGRIIRDESGNVVKIVEEKDASEEEKRVKEINSGMYVVDIAKLRAALKEITNDNAQGEYYLTDAVEIIRNMGGKIGAVVGESEEIIGVNSRVQLSNAEKVMRRRINEKHMENGVTIIDPDSTYIDAEVEIGRDTVILPGTILQGKTKIGEDCEIGPNSRIVDSTIGNGCNVMYSVVLSSSVGNNVKIGPFAHIRPESVIKNNVKIGDFVEIKKSVIDEGSKVPHLTYVGDAELGKNVNMGCGSITVNYDGKQKHKTIIGDNVFVGCNVNLVAPVKIGNNAYIAAGSTITEDVPEGALAIARSRQTNKEGWVEERIKKGRL</sequence>
<accession>Q8R752</accession>
<comment type="function">
    <text evidence="1">Catalyzes the last two sequential reactions in the de novo biosynthetic pathway for UDP-N-acetylglucosamine (UDP-GlcNAc). The C-terminal domain catalyzes the transfer of acetyl group from acetyl coenzyme A to glucosamine-1-phosphate (GlcN-1-P) to produce N-acetylglucosamine-1-phosphate (GlcNAc-1-P), which is converted into UDP-GlcNAc by the transfer of uridine 5-monophosphate (from uridine 5-triphosphate), a reaction catalyzed by the N-terminal domain.</text>
</comment>
<comment type="catalytic activity">
    <reaction evidence="1">
        <text>alpha-D-glucosamine 1-phosphate + acetyl-CoA = N-acetyl-alpha-D-glucosamine 1-phosphate + CoA + H(+)</text>
        <dbReference type="Rhea" id="RHEA:13725"/>
        <dbReference type="ChEBI" id="CHEBI:15378"/>
        <dbReference type="ChEBI" id="CHEBI:57287"/>
        <dbReference type="ChEBI" id="CHEBI:57288"/>
        <dbReference type="ChEBI" id="CHEBI:57776"/>
        <dbReference type="ChEBI" id="CHEBI:58516"/>
        <dbReference type="EC" id="2.3.1.157"/>
    </reaction>
</comment>
<comment type="catalytic activity">
    <reaction evidence="1">
        <text>N-acetyl-alpha-D-glucosamine 1-phosphate + UTP + H(+) = UDP-N-acetyl-alpha-D-glucosamine + diphosphate</text>
        <dbReference type="Rhea" id="RHEA:13509"/>
        <dbReference type="ChEBI" id="CHEBI:15378"/>
        <dbReference type="ChEBI" id="CHEBI:33019"/>
        <dbReference type="ChEBI" id="CHEBI:46398"/>
        <dbReference type="ChEBI" id="CHEBI:57705"/>
        <dbReference type="ChEBI" id="CHEBI:57776"/>
        <dbReference type="EC" id="2.7.7.23"/>
    </reaction>
</comment>
<comment type="cofactor">
    <cofactor evidence="1">
        <name>Mg(2+)</name>
        <dbReference type="ChEBI" id="CHEBI:18420"/>
    </cofactor>
    <text evidence="1">Binds 1 Mg(2+) ion per subunit.</text>
</comment>
<comment type="pathway">
    <text evidence="1">Nucleotide-sugar biosynthesis; UDP-N-acetyl-alpha-D-glucosamine biosynthesis; N-acetyl-alpha-D-glucosamine 1-phosphate from alpha-D-glucosamine 6-phosphate (route II): step 2/2.</text>
</comment>
<comment type="pathway">
    <text evidence="1">Nucleotide-sugar biosynthesis; UDP-N-acetyl-alpha-D-glucosamine biosynthesis; UDP-N-acetyl-alpha-D-glucosamine from N-acetyl-alpha-D-glucosamine 1-phosphate: step 1/1.</text>
</comment>
<comment type="pathway">
    <text evidence="1">Bacterial outer membrane biogenesis; LPS lipid A biosynthesis.</text>
</comment>
<comment type="subunit">
    <text evidence="1">Homotrimer.</text>
</comment>
<comment type="subcellular location">
    <subcellularLocation>
        <location evidence="1">Cytoplasm</location>
    </subcellularLocation>
</comment>
<comment type="similarity">
    <text evidence="1">In the N-terminal section; belongs to the N-acetylglucosamine-1-phosphate uridyltransferase family.</text>
</comment>
<comment type="similarity">
    <text evidence="1">In the C-terminal section; belongs to the transferase hexapeptide repeat family.</text>
</comment>
<keyword id="KW-0012">Acyltransferase</keyword>
<keyword id="KW-0133">Cell shape</keyword>
<keyword id="KW-0961">Cell wall biogenesis/degradation</keyword>
<keyword id="KW-0963">Cytoplasm</keyword>
<keyword id="KW-0460">Magnesium</keyword>
<keyword id="KW-0479">Metal-binding</keyword>
<keyword id="KW-0511">Multifunctional enzyme</keyword>
<keyword id="KW-0548">Nucleotidyltransferase</keyword>
<keyword id="KW-0573">Peptidoglycan synthesis</keyword>
<keyword id="KW-1185">Reference proteome</keyword>
<keyword id="KW-0677">Repeat</keyword>
<keyword id="KW-0808">Transferase</keyword>
<feature type="chain" id="PRO_0000233866" description="Bifunctional protein GlmU">
    <location>
        <begin position="1"/>
        <end position="457"/>
    </location>
</feature>
<feature type="region of interest" description="Pyrophosphorylase" evidence="1">
    <location>
        <begin position="1"/>
        <end position="228"/>
    </location>
</feature>
<feature type="region of interest" description="Linker" evidence="1">
    <location>
        <begin position="229"/>
        <end position="249"/>
    </location>
</feature>
<feature type="region of interest" description="N-acetyltransferase" evidence="1">
    <location>
        <begin position="250"/>
        <end position="457"/>
    </location>
</feature>
<feature type="active site" description="Proton acceptor" evidence="1">
    <location>
        <position position="361"/>
    </location>
</feature>
<feature type="binding site" evidence="1">
    <location>
        <begin position="9"/>
        <end position="12"/>
    </location>
    <ligand>
        <name>UDP-N-acetyl-alpha-D-glucosamine</name>
        <dbReference type="ChEBI" id="CHEBI:57705"/>
    </ligand>
</feature>
<feature type="binding site" evidence="1">
    <location>
        <position position="23"/>
    </location>
    <ligand>
        <name>UDP-N-acetyl-alpha-D-glucosamine</name>
        <dbReference type="ChEBI" id="CHEBI:57705"/>
    </ligand>
</feature>
<feature type="binding site" evidence="1">
    <location>
        <position position="73"/>
    </location>
    <ligand>
        <name>UDP-N-acetyl-alpha-D-glucosamine</name>
        <dbReference type="ChEBI" id="CHEBI:57705"/>
    </ligand>
</feature>
<feature type="binding site" evidence="1">
    <location>
        <begin position="78"/>
        <end position="79"/>
    </location>
    <ligand>
        <name>UDP-N-acetyl-alpha-D-glucosamine</name>
        <dbReference type="ChEBI" id="CHEBI:57705"/>
    </ligand>
</feature>
<feature type="binding site" evidence="1">
    <location>
        <position position="102"/>
    </location>
    <ligand>
        <name>Mg(2+)</name>
        <dbReference type="ChEBI" id="CHEBI:18420"/>
    </ligand>
</feature>
<feature type="binding site" evidence="1">
    <location>
        <position position="139"/>
    </location>
    <ligand>
        <name>UDP-N-acetyl-alpha-D-glucosamine</name>
        <dbReference type="ChEBI" id="CHEBI:57705"/>
    </ligand>
</feature>
<feature type="binding site" evidence="1">
    <location>
        <position position="154"/>
    </location>
    <ligand>
        <name>UDP-N-acetyl-alpha-D-glucosamine</name>
        <dbReference type="ChEBI" id="CHEBI:57705"/>
    </ligand>
</feature>
<feature type="binding site" evidence="1">
    <location>
        <position position="169"/>
    </location>
    <ligand>
        <name>UDP-N-acetyl-alpha-D-glucosamine</name>
        <dbReference type="ChEBI" id="CHEBI:57705"/>
    </ligand>
</feature>
<feature type="binding site" evidence="1">
    <location>
        <position position="226"/>
    </location>
    <ligand>
        <name>Mg(2+)</name>
        <dbReference type="ChEBI" id="CHEBI:18420"/>
    </ligand>
</feature>
<feature type="binding site" evidence="1">
    <location>
        <position position="226"/>
    </location>
    <ligand>
        <name>UDP-N-acetyl-alpha-D-glucosamine</name>
        <dbReference type="ChEBI" id="CHEBI:57705"/>
    </ligand>
</feature>
<feature type="binding site" evidence="1">
    <location>
        <position position="331"/>
    </location>
    <ligand>
        <name>UDP-N-acetyl-alpha-D-glucosamine</name>
        <dbReference type="ChEBI" id="CHEBI:57705"/>
    </ligand>
</feature>
<feature type="binding site" evidence="1">
    <location>
        <position position="349"/>
    </location>
    <ligand>
        <name>UDP-N-acetyl-alpha-D-glucosamine</name>
        <dbReference type="ChEBI" id="CHEBI:57705"/>
    </ligand>
</feature>
<feature type="binding site" evidence="1">
    <location>
        <position position="364"/>
    </location>
    <ligand>
        <name>UDP-N-acetyl-alpha-D-glucosamine</name>
        <dbReference type="ChEBI" id="CHEBI:57705"/>
    </ligand>
</feature>
<feature type="binding site" evidence="1">
    <location>
        <position position="375"/>
    </location>
    <ligand>
        <name>UDP-N-acetyl-alpha-D-glucosamine</name>
        <dbReference type="ChEBI" id="CHEBI:57705"/>
    </ligand>
</feature>
<feature type="binding site" evidence="1">
    <location>
        <begin position="384"/>
        <end position="385"/>
    </location>
    <ligand>
        <name>acetyl-CoA</name>
        <dbReference type="ChEBI" id="CHEBI:57288"/>
    </ligand>
</feature>
<feature type="binding site" evidence="1">
    <location>
        <position position="421"/>
    </location>
    <ligand>
        <name>acetyl-CoA</name>
        <dbReference type="ChEBI" id="CHEBI:57288"/>
    </ligand>
</feature>
<feature type="binding site" evidence="1">
    <location>
        <position position="438"/>
    </location>
    <ligand>
        <name>acetyl-CoA</name>
        <dbReference type="ChEBI" id="CHEBI:57288"/>
    </ligand>
</feature>